<keyword id="KW-0067">ATP-binding</keyword>
<keyword id="KW-0106">Calcium</keyword>
<keyword id="KW-0418">Kinase</keyword>
<keyword id="KW-0449">Lipoprotein</keyword>
<keyword id="KW-0472">Membrane</keyword>
<keyword id="KW-0479">Metal-binding</keyword>
<keyword id="KW-0519">Myristate</keyword>
<keyword id="KW-0547">Nucleotide-binding</keyword>
<keyword id="KW-1185">Reference proteome</keyword>
<keyword id="KW-0677">Repeat</keyword>
<keyword id="KW-0723">Serine/threonine-protein kinase</keyword>
<keyword id="KW-0808">Transferase</keyword>
<comment type="function">
    <text evidence="1">May play a role in signal transduction pathways that involve calcium as a second messenger.</text>
</comment>
<comment type="catalytic activity">
    <reaction evidence="8">
        <text>L-seryl-[protein] + ATP = O-phospho-L-seryl-[protein] + ADP + H(+)</text>
        <dbReference type="Rhea" id="RHEA:17989"/>
        <dbReference type="Rhea" id="RHEA-COMP:9863"/>
        <dbReference type="Rhea" id="RHEA-COMP:11604"/>
        <dbReference type="ChEBI" id="CHEBI:15378"/>
        <dbReference type="ChEBI" id="CHEBI:29999"/>
        <dbReference type="ChEBI" id="CHEBI:30616"/>
        <dbReference type="ChEBI" id="CHEBI:83421"/>
        <dbReference type="ChEBI" id="CHEBI:456216"/>
        <dbReference type="EC" id="2.7.11.1"/>
    </reaction>
</comment>
<comment type="catalytic activity">
    <reaction evidence="8">
        <text>L-threonyl-[protein] + ATP = O-phospho-L-threonyl-[protein] + ADP + H(+)</text>
        <dbReference type="Rhea" id="RHEA:46608"/>
        <dbReference type="Rhea" id="RHEA-COMP:11060"/>
        <dbReference type="Rhea" id="RHEA-COMP:11605"/>
        <dbReference type="ChEBI" id="CHEBI:15378"/>
        <dbReference type="ChEBI" id="CHEBI:30013"/>
        <dbReference type="ChEBI" id="CHEBI:30616"/>
        <dbReference type="ChEBI" id="CHEBI:61977"/>
        <dbReference type="ChEBI" id="CHEBI:456216"/>
        <dbReference type="EC" id="2.7.11.1"/>
    </reaction>
</comment>
<comment type="activity regulation">
    <text evidence="1">Activated by calcium. Autophosphorylation may play an important role in the regulation of the kinase activity.</text>
</comment>
<comment type="subcellular location">
    <subcellularLocation>
        <location evidence="8">Membrane</location>
        <topology evidence="8">Lipid-anchor</topology>
    </subcellularLocation>
</comment>
<comment type="tissue specificity">
    <text evidence="6">Expressed in heading panicles, spikelets and mature pollen grains.</text>
</comment>
<comment type="domain">
    <text evidence="1">There are 3 contiguous domains conserved in the CDPK subfamily: a kinase domain, an autoinhibitory (junction) domain and a calmodulin-like domain. The autoinhibitory domain (325-355) inactivates kinase activity under calcium-free conditions.</text>
</comment>
<comment type="similarity">
    <text evidence="8">Belongs to the protein kinase superfamily. Ser/Thr protein kinase family. CDPK subfamily.</text>
</comment>
<dbReference type="EC" id="2.7.11.1" evidence="8"/>
<dbReference type="EMBL" id="AP003073">
    <property type="protein sequence ID" value="BAD68074.1"/>
    <property type="molecule type" value="Genomic_DNA"/>
</dbReference>
<dbReference type="EMBL" id="AP003260">
    <property type="protein sequence ID" value="BAD68220.1"/>
    <property type="molecule type" value="Genomic_DNA"/>
</dbReference>
<dbReference type="EMBL" id="AP008207">
    <property type="protein sequence ID" value="BAF06489.1"/>
    <property type="molecule type" value="Genomic_DNA"/>
</dbReference>
<dbReference type="EMBL" id="AP014957">
    <property type="protein sequence ID" value="BAS74853.1"/>
    <property type="molecule type" value="Genomic_DNA"/>
</dbReference>
<dbReference type="EMBL" id="AK112112">
    <property type="status" value="NOT_ANNOTATED_CDS"/>
    <property type="molecule type" value="mRNA"/>
</dbReference>
<dbReference type="RefSeq" id="XP_015632341.1">
    <property type="nucleotide sequence ID" value="XM_015776855.1"/>
</dbReference>
<dbReference type="SMR" id="Q5VQQ5"/>
<dbReference type="FunCoup" id="Q5VQQ5">
    <property type="interactions" value="1779"/>
</dbReference>
<dbReference type="STRING" id="39947.Q5VQQ5"/>
<dbReference type="PaxDb" id="39947-Q5VQQ5"/>
<dbReference type="EnsemblPlants" id="Os01t0808400-01">
    <property type="protein sequence ID" value="Os01t0808400-01"/>
    <property type="gene ID" value="Os01g0808400"/>
</dbReference>
<dbReference type="Gramene" id="Os01t0808400-01">
    <property type="protein sequence ID" value="Os01t0808400-01"/>
    <property type="gene ID" value="Os01g0808400"/>
</dbReference>
<dbReference type="KEGG" id="dosa:Os01g0808400"/>
<dbReference type="eggNOG" id="KOG0032">
    <property type="taxonomic scope" value="Eukaryota"/>
</dbReference>
<dbReference type="HOGENOM" id="CLU_000288_37_3_1"/>
<dbReference type="InParanoid" id="Q5VQQ5"/>
<dbReference type="OMA" id="YMTTRVG"/>
<dbReference type="OrthoDB" id="40902at2759"/>
<dbReference type="Proteomes" id="UP000000763">
    <property type="component" value="Chromosome 1"/>
</dbReference>
<dbReference type="Proteomes" id="UP000059680">
    <property type="component" value="Chromosome 1"/>
</dbReference>
<dbReference type="GO" id="GO:0005737">
    <property type="term" value="C:cytoplasm"/>
    <property type="evidence" value="ECO:0000318"/>
    <property type="project" value="GO_Central"/>
</dbReference>
<dbReference type="GO" id="GO:0016020">
    <property type="term" value="C:membrane"/>
    <property type="evidence" value="ECO:0007669"/>
    <property type="project" value="UniProtKB-SubCell"/>
</dbReference>
<dbReference type="GO" id="GO:0005634">
    <property type="term" value="C:nucleus"/>
    <property type="evidence" value="ECO:0000318"/>
    <property type="project" value="GO_Central"/>
</dbReference>
<dbReference type="GO" id="GO:0005524">
    <property type="term" value="F:ATP binding"/>
    <property type="evidence" value="ECO:0007669"/>
    <property type="project" value="UniProtKB-KW"/>
</dbReference>
<dbReference type="GO" id="GO:0005509">
    <property type="term" value="F:calcium ion binding"/>
    <property type="evidence" value="ECO:0007669"/>
    <property type="project" value="InterPro"/>
</dbReference>
<dbReference type="GO" id="GO:0009931">
    <property type="term" value="F:calcium-dependent protein serine/threonine kinase activity"/>
    <property type="evidence" value="ECO:0000318"/>
    <property type="project" value="GO_Central"/>
</dbReference>
<dbReference type="GO" id="GO:0004683">
    <property type="term" value="F:calcium/calmodulin-dependent protein kinase activity"/>
    <property type="evidence" value="ECO:0000318"/>
    <property type="project" value="GO_Central"/>
</dbReference>
<dbReference type="GO" id="GO:0005516">
    <property type="term" value="F:calmodulin binding"/>
    <property type="evidence" value="ECO:0000318"/>
    <property type="project" value="GO_Central"/>
</dbReference>
<dbReference type="GO" id="GO:0106310">
    <property type="term" value="F:protein serine kinase activity"/>
    <property type="evidence" value="ECO:0007669"/>
    <property type="project" value="RHEA"/>
</dbReference>
<dbReference type="GO" id="GO:0035556">
    <property type="term" value="P:intracellular signal transduction"/>
    <property type="evidence" value="ECO:0000318"/>
    <property type="project" value="GO_Central"/>
</dbReference>
<dbReference type="CDD" id="cd05117">
    <property type="entry name" value="STKc_CAMK"/>
    <property type="match status" value="1"/>
</dbReference>
<dbReference type="FunFam" id="1.10.238.10:FF:000015">
    <property type="entry name" value="Calcium-dependent protein kinase 1"/>
    <property type="match status" value="1"/>
</dbReference>
<dbReference type="FunFam" id="3.30.200.20:FF:000004">
    <property type="entry name" value="Calcium-dependent protein kinase 1"/>
    <property type="match status" value="1"/>
</dbReference>
<dbReference type="FunFam" id="1.10.510.10:FF:000056">
    <property type="entry name" value="calcium-dependent protein kinase 1"/>
    <property type="match status" value="1"/>
</dbReference>
<dbReference type="Gene3D" id="1.10.238.10">
    <property type="entry name" value="EF-hand"/>
    <property type="match status" value="1"/>
</dbReference>
<dbReference type="Gene3D" id="3.30.200.20">
    <property type="entry name" value="Phosphorylase Kinase, domain 1"/>
    <property type="match status" value="1"/>
</dbReference>
<dbReference type="Gene3D" id="1.10.510.10">
    <property type="entry name" value="Transferase(Phosphotransferase) domain 1"/>
    <property type="match status" value="1"/>
</dbReference>
<dbReference type="InterPro" id="IPR050205">
    <property type="entry name" value="CDPK_Ser/Thr_kinases"/>
</dbReference>
<dbReference type="InterPro" id="IPR011992">
    <property type="entry name" value="EF-hand-dom_pair"/>
</dbReference>
<dbReference type="InterPro" id="IPR018247">
    <property type="entry name" value="EF_Hand_1_Ca_BS"/>
</dbReference>
<dbReference type="InterPro" id="IPR002048">
    <property type="entry name" value="EF_hand_dom"/>
</dbReference>
<dbReference type="InterPro" id="IPR011009">
    <property type="entry name" value="Kinase-like_dom_sf"/>
</dbReference>
<dbReference type="InterPro" id="IPR000719">
    <property type="entry name" value="Prot_kinase_dom"/>
</dbReference>
<dbReference type="InterPro" id="IPR017441">
    <property type="entry name" value="Protein_kinase_ATP_BS"/>
</dbReference>
<dbReference type="InterPro" id="IPR008271">
    <property type="entry name" value="Ser/Thr_kinase_AS"/>
</dbReference>
<dbReference type="PANTHER" id="PTHR24349">
    <property type="entry name" value="SERINE/THREONINE-PROTEIN KINASE"/>
    <property type="match status" value="1"/>
</dbReference>
<dbReference type="Pfam" id="PF13499">
    <property type="entry name" value="EF-hand_7"/>
    <property type="match status" value="2"/>
</dbReference>
<dbReference type="Pfam" id="PF00069">
    <property type="entry name" value="Pkinase"/>
    <property type="match status" value="1"/>
</dbReference>
<dbReference type="SMART" id="SM00054">
    <property type="entry name" value="EFh"/>
    <property type="match status" value="4"/>
</dbReference>
<dbReference type="SMART" id="SM00220">
    <property type="entry name" value="S_TKc"/>
    <property type="match status" value="1"/>
</dbReference>
<dbReference type="SUPFAM" id="SSF47473">
    <property type="entry name" value="EF-hand"/>
    <property type="match status" value="1"/>
</dbReference>
<dbReference type="SUPFAM" id="SSF56112">
    <property type="entry name" value="Protein kinase-like (PK-like)"/>
    <property type="match status" value="1"/>
</dbReference>
<dbReference type="PROSITE" id="PS00018">
    <property type="entry name" value="EF_HAND_1"/>
    <property type="match status" value="4"/>
</dbReference>
<dbReference type="PROSITE" id="PS50222">
    <property type="entry name" value="EF_HAND_2"/>
    <property type="match status" value="4"/>
</dbReference>
<dbReference type="PROSITE" id="PS00107">
    <property type="entry name" value="PROTEIN_KINASE_ATP"/>
    <property type="match status" value="1"/>
</dbReference>
<dbReference type="PROSITE" id="PS50011">
    <property type="entry name" value="PROTEIN_KINASE_DOM"/>
    <property type="match status" value="1"/>
</dbReference>
<dbReference type="PROSITE" id="PS00108">
    <property type="entry name" value="PROTEIN_KINASE_ST"/>
    <property type="match status" value="1"/>
</dbReference>
<evidence type="ECO:0000250" key="1">
    <source>
        <dbReference type="UniProtKB" id="Q06850"/>
    </source>
</evidence>
<evidence type="ECO:0000255" key="2"/>
<evidence type="ECO:0000255" key="3">
    <source>
        <dbReference type="PROSITE-ProRule" id="PRU00159"/>
    </source>
</evidence>
<evidence type="ECO:0000255" key="4">
    <source>
        <dbReference type="PROSITE-ProRule" id="PRU00448"/>
    </source>
</evidence>
<evidence type="ECO:0000256" key="5">
    <source>
        <dbReference type="SAM" id="MobiDB-lite"/>
    </source>
</evidence>
<evidence type="ECO:0000269" key="6">
    <source>
    </source>
</evidence>
<evidence type="ECO:0000303" key="7">
    <source>
    </source>
</evidence>
<evidence type="ECO:0000305" key="8"/>
<evidence type="ECO:0000312" key="9">
    <source>
        <dbReference type="EMBL" id="BAD68074.1"/>
    </source>
</evidence>
<evidence type="ECO:0000312" key="10">
    <source>
        <dbReference type="EMBL" id="BAD68220.1"/>
    </source>
</evidence>
<evidence type="ECO:0000312" key="11">
    <source>
        <dbReference type="EMBL" id="BAF06489.1"/>
    </source>
</evidence>
<sequence length="515" mass="56951">MGNCCPGSGDAEPASSDASTGNGSSSFKAGASPSSAPAQNKPPAPIGPVLGRPMEDVRSIYTIGKELGRGQFGVTSLCTHKATGQKFACKTIAKRKLSTKEDVEDVRREVQIMYHLAGQPNVVELKGAYEDKQSVHLVMELCAGGELFDRIIAKGHYTERAAASLLRTIVEIIHTCHSLGVIHRDLKPENFLLLSKDEDAPLKATDFGLSVFFKQGEVFKDIVGSAYYIAPEVLKRSYGPEADIWSVGVILYILLCGVPPFWAESEHGIFNSILRGQVDFTSDPWPRISASAKDLVRKMLNSDPKKRISAYEVLNHPWIKEDGEAPDTPLDNAVMNRLKQFRAMNQFKKAALRVIAGCLSEEEIRGLKEMFKSMDSDNSGTITVDELRKGLSKQGTKLTEAEVQQLMEAADADGNGTIDYDEFITATMHMNRMDREEHLYTAFQYFDKDNSGCISKEELEQALREKGLLDGRDIKDIISEVDADNDGRIDYSEFAAMMRKGNPEANPKKRRDVVI</sequence>
<reference key="1">
    <citation type="journal article" date="2002" name="Nature">
        <title>The genome sequence and structure of rice chromosome 1.</title>
        <authorList>
            <person name="Sasaki T."/>
            <person name="Matsumoto T."/>
            <person name="Yamamoto K."/>
            <person name="Sakata K."/>
            <person name="Baba T."/>
            <person name="Katayose Y."/>
            <person name="Wu J."/>
            <person name="Niimura Y."/>
            <person name="Cheng Z."/>
            <person name="Nagamura Y."/>
            <person name="Antonio B.A."/>
            <person name="Kanamori H."/>
            <person name="Hosokawa S."/>
            <person name="Masukawa M."/>
            <person name="Arikawa K."/>
            <person name="Chiden Y."/>
            <person name="Hayashi M."/>
            <person name="Okamoto M."/>
            <person name="Ando T."/>
            <person name="Aoki H."/>
            <person name="Arita K."/>
            <person name="Hamada M."/>
            <person name="Harada C."/>
            <person name="Hijishita S."/>
            <person name="Honda M."/>
            <person name="Ichikawa Y."/>
            <person name="Idonuma A."/>
            <person name="Iijima M."/>
            <person name="Ikeda M."/>
            <person name="Ikeno M."/>
            <person name="Ito S."/>
            <person name="Ito T."/>
            <person name="Ito Y."/>
            <person name="Ito Y."/>
            <person name="Iwabuchi A."/>
            <person name="Kamiya K."/>
            <person name="Karasawa W."/>
            <person name="Katagiri S."/>
            <person name="Kikuta A."/>
            <person name="Kobayashi N."/>
            <person name="Kono I."/>
            <person name="Machita K."/>
            <person name="Maehara T."/>
            <person name="Mizuno H."/>
            <person name="Mizubayashi T."/>
            <person name="Mukai Y."/>
            <person name="Nagasaki H."/>
            <person name="Nakashima M."/>
            <person name="Nakama Y."/>
            <person name="Nakamichi Y."/>
            <person name="Nakamura M."/>
            <person name="Namiki N."/>
            <person name="Negishi M."/>
            <person name="Ohta I."/>
            <person name="Ono N."/>
            <person name="Saji S."/>
            <person name="Sakai K."/>
            <person name="Shibata M."/>
            <person name="Shimokawa T."/>
            <person name="Shomura A."/>
            <person name="Song J."/>
            <person name="Takazaki Y."/>
            <person name="Terasawa K."/>
            <person name="Tsuji K."/>
            <person name="Waki K."/>
            <person name="Yamagata H."/>
            <person name="Yamane H."/>
            <person name="Yoshiki S."/>
            <person name="Yoshihara R."/>
            <person name="Yukawa K."/>
            <person name="Zhong H."/>
            <person name="Iwama H."/>
            <person name="Endo T."/>
            <person name="Ito H."/>
            <person name="Hahn J.H."/>
            <person name="Kim H.-I."/>
            <person name="Eun M.-Y."/>
            <person name="Yano M."/>
            <person name="Jiang J."/>
            <person name="Gojobori T."/>
        </authorList>
    </citation>
    <scope>NUCLEOTIDE SEQUENCE [LARGE SCALE GENOMIC DNA]</scope>
    <source>
        <strain>cv. Nipponbare</strain>
    </source>
</reference>
<reference key="2">
    <citation type="journal article" date="2005" name="Nature">
        <title>The map-based sequence of the rice genome.</title>
        <authorList>
            <consortium name="International rice genome sequencing project (IRGSP)"/>
        </authorList>
    </citation>
    <scope>NUCLEOTIDE SEQUENCE [LARGE SCALE GENOMIC DNA]</scope>
    <source>
        <strain>cv. Nipponbare</strain>
    </source>
</reference>
<reference key="3">
    <citation type="journal article" date="2008" name="Nucleic Acids Res.">
        <title>The rice annotation project database (RAP-DB): 2008 update.</title>
        <authorList>
            <consortium name="The rice annotation project (RAP)"/>
        </authorList>
    </citation>
    <scope>GENOME REANNOTATION</scope>
    <source>
        <strain>cv. Nipponbare</strain>
    </source>
</reference>
<reference key="4">
    <citation type="journal article" date="2013" name="Rice">
        <title>Improvement of the Oryza sativa Nipponbare reference genome using next generation sequence and optical map data.</title>
        <authorList>
            <person name="Kawahara Y."/>
            <person name="de la Bastide M."/>
            <person name="Hamilton J.P."/>
            <person name="Kanamori H."/>
            <person name="McCombie W.R."/>
            <person name="Ouyang S."/>
            <person name="Schwartz D.C."/>
            <person name="Tanaka T."/>
            <person name="Wu J."/>
            <person name="Zhou S."/>
            <person name="Childs K.L."/>
            <person name="Davidson R.M."/>
            <person name="Lin H."/>
            <person name="Quesada-Ocampo L."/>
            <person name="Vaillancourt B."/>
            <person name="Sakai H."/>
            <person name="Lee S.S."/>
            <person name="Kim J."/>
            <person name="Numa H."/>
            <person name="Itoh T."/>
            <person name="Buell C.R."/>
            <person name="Matsumoto T."/>
        </authorList>
    </citation>
    <scope>GENOME REANNOTATION</scope>
    <source>
        <strain>cv. Nipponbare</strain>
    </source>
</reference>
<reference key="5">
    <citation type="journal article" date="2003" name="Science">
        <title>Collection, mapping, and annotation of over 28,000 cDNA clones from japonica rice.</title>
        <authorList>
            <consortium name="The rice full-length cDNA consortium"/>
        </authorList>
    </citation>
    <scope>NUCLEOTIDE SEQUENCE [LARGE SCALE MRNA]</scope>
    <source>
        <strain>cv. Nipponbare</strain>
    </source>
</reference>
<reference key="6">
    <citation type="journal article" date="2005" name="Plant Cell Physiol.">
        <title>Genome-wide identification of the rice calcium-dependent protein kinase and its closely related kinase gene families: comprehensive analysis of the CDPKs gene family in rice.</title>
        <authorList>
            <person name="Asano T."/>
            <person name="Tanaka N."/>
            <person name="Yang G."/>
            <person name="Hayashi N."/>
            <person name="Komatsu S."/>
        </authorList>
    </citation>
    <scope>GENE FAMILY</scope>
    <scope>NOMENCLATURE</scope>
</reference>
<reference key="7">
    <citation type="journal article" date="2011" name="Plant Cell Physiol.">
        <title>OIP30, a RuvB-like DNA helicase 2, is a potential substrate for the pollen-predominant OsCPK25/26 in rice.</title>
        <authorList>
            <person name="Wang C.W."/>
            <person name="Chen W.C."/>
            <person name="Lin L.J."/>
            <person name="Lee C.T."/>
            <person name="Tseng T.H."/>
            <person name="Leu W.M."/>
        </authorList>
    </citation>
    <scope>TISSUE SPECIFICITY</scope>
</reference>
<name>CDPK2_ORYSJ</name>
<gene>
    <name evidence="7" type="primary">CPK2</name>
    <name evidence="11" type="ordered locus">Os01g0808400</name>
    <name evidence="8" type="ordered locus">LOC_Os01g59360</name>
    <name evidence="10" type="ORF">P0468B07.1</name>
    <name evidence="9" type="ORF">P0702B09.46</name>
</gene>
<organism>
    <name type="scientific">Oryza sativa subsp. japonica</name>
    <name type="common">Rice</name>
    <dbReference type="NCBI Taxonomy" id="39947"/>
    <lineage>
        <taxon>Eukaryota</taxon>
        <taxon>Viridiplantae</taxon>
        <taxon>Streptophyta</taxon>
        <taxon>Embryophyta</taxon>
        <taxon>Tracheophyta</taxon>
        <taxon>Spermatophyta</taxon>
        <taxon>Magnoliopsida</taxon>
        <taxon>Liliopsida</taxon>
        <taxon>Poales</taxon>
        <taxon>Poaceae</taxon>
        <taxon>BOP clade</taxon>
        <taxon>Oryzoideae</taxon>
        <taxon>Oryzeae</taxon>
        <taxon>Oryzinae</taxon>
        <taxon>Oryza</taxon>
        <taxon>Oryza sativa</taxon>
    </lineage>
</organism>
<proteinExistence type="evidence at transcript level"/>
<accession>Q5VQQ5</accession>
<protein>
    <recommendedName>
        <fullName evidence="8">Calcium-dependent protein kinase 2</fullName>
        <shortName evidence="8">OsCDPK2</shortName>
        <shortName evidence="7">OsCPK2</shortName>
        <ecNumber evidence="8">2.7.11.1</ecNumber>
    </recommendedName>
</protein>
<feature type="initiator methionine" description="Removed" evidence="2">
    <location>
        <position position="1"/>
    </location>
</feature>
<feature type="chain" id="PRO_0000437547" description="Calcium-dependent protein kinase 2">
    <location>
        <begin position="2"/>
        <end position="515"/>
    </location>
</feature>
<feature type="domain" description="Protein kinase" evidence="3">
    <location>
        <begin position="61"/>
        <end position="319"/>
    </location>
</feature>
<feature type="domain" description="EF-hand 1" evidence="4">
    <location>
        <begin position="362"/>
        <end position="397"/>
    </location>
</feature>
<feature type="domain" description="EF-hand 2" evidence="4">
    <location>
        <begin position="398"/>
        <end position="433"/>
    </location>
</feature>
<feature type="domain" description="EF-hand 3" evidence="4">
    <location>
        <begin position="434"/>
        <end position="469"/>
    </location>
</feature>
<feature type="domain" description="EF-hand 4" evidence="4">
    <location>
        <begin position="473"/>
        <end position="504"/>
    </location>
</feature>
<feature type="region of interest" description="Disordered" evidence="5">
    <location>
        <begin position="1"/>
        <end position="51"/>
    </location>
</feature>
<feature type="region of interest" description="Autoinhibitory domain" evidence="1">
    <location>
        <begin position="325"/>
        <end position="355"/>
    </location>
</feature>
<feature type="compositionally biased region" description="Low complexity" evidence="5">
    <location>
        <begin position="14"/>
        <end position="38"/>
    </location>
</feature>
<feature type="active site" description="Proton acceptor" evidence="3">
    <location>
        <position position="185"/>
    </location>
</feature>
<feature type="binding site" evidence="3">
    <location>
        <begin position="67"/>
        <end position="75"/>
    </location>
    <ligand>
        <name>ATP</name>
        <dbReference type="ChEBI" id="CHEBI:30616"/>
    </ligand>
</feature>
<feature type="binding site" evidence="3">
    <location>
        <position position="90"/>
    </location>
    <ligand>
        <name>ATP</name>
        <dbReference type="ChEBI" id="CHEBI:30616"/>
    </ligand>
</feature>
<feature type="binding site" evidence="4">
    <location>
        <position position="375"/>
    </location>
    <ligand>
        <name>Ca(2+)</name>
        <dbReference type="ChEBI" id="CHEBI:29108"/>
        <label>1</label>
    </ligand>
</feature>
<feature type="binding site" evidence="4">
    <location>
        <position position="377"/>
    </location>
    <ligand>
        <name>Ca(2+)</name>
        <dbReference type="ChEBI" id="CHEBI:29108"/>
        <label>1</label>
    </ligand>
</feature>
<feature type="binding site" evidence="4">
    <location>
        <position position="379"/>
    </location>
    <ligand>
        <name>Ca(2+)</name>
        <dbReference type="ChEBI" id="CHEBI:29108"/>
        <label>1</label>
    </ligand>
</feature>
<feature type="binding site" evidence="4">
    <location>
        <position position="381"/>
    </location>
    <ligand>
        <name>Ca(2+)</name>
        <dbReference type="ChEBI" id="CHEBI:29108"/>
        <label>1</label>
    </ligand>
</feature>
<feature type="binding site" evidence="4">
    <location>
        <position position="386"/>
    </location>
    <ligand>
        <name>Ca(2+)</name>
        <dbReference type="ChEBI" id="CHEBI:29108"/>
        <label>1</label>
    </ligand>
</feature>
<feature type="binding site" evidence="4">
    <location>
        <position position="411"/>
    </location>
    <ligand>
        <name>Ca(2+)</name>
        <dbReference type="ChEBI" id="CHEBI:29108"/>
        <label>2</label>
    </ligand>
</feature>
<feature type="binding site" evidence="4">
    <location>
        <position position="413"/>
    </location>
    <ligand>
        <name>Ca(2+)</name>
        <dbReference type="ChEBI" id="CHEBI:29108"/>
        <label>2</label>
    </ligand>
</feature>
<feature type="binding site" evidence="4">
    <location>
        <position position="415"/>
    </location>
    <ligand>
        <name>Ca(2+)</name>
        <dbReference type="ChEBI" id="CHEBI:29108"/>
        <label>2</label>
    </ligand>
</feature>
<feature type="binding site" evidence="4">
    <location>
        <position position="417"/>
    </location>
    <ligand>
        <name>Ca(2+)</name>
        <dbReference type="ChEBI" id="CHEBI:29108"/>
        <label>2</label>
    </ligand>
</feature>
<feature type="binding site" evidence="4">
    <location>
        <position position="422"/>
    </location>
    <ligand>
        <name>Ca(2+)</name>
        <dbReference type="ChEBI" id="CHEBI:29108"/>
        <label>2</label>
    </ligand>
</feature>
<feature type="binding site" evidence="4">
    <location>
        <position position="447"/>
    </location>
    <ligand>
        <name>Ca(2+)</name>
        <dbReference type="ChEBI" id="CHEBI:29108"/>
        <label>3</label>
    </ligand>
</feature>
<feature type="binding site" evidence="4">
    <location>
        <position position="449"/>
    </location>
    <ligand>
        <name>Ca(2+)</name>
        <dbReference type="ChEBI" id="CHEBI:29108"/>
        <label>3</label>
    </ligand>
</feature>
<feature type="binding site" evidence="4">
    <location>
        <position position="451"/>
    </location>
    <ligand>
        <name>Ca(2+)</name>
        <dbReference type="ChEBI" id="CHEBI:29108"/>
        <label>3</label>
    </ligand>
</feature>
<feature type="binding site" evidence="4">
    <location>
        <position position="453"/>
    </location>
    <ligand>
        <name>Ca(2+)</name>
        <dbReference type="ChEBI" id="CHEBI:29108"/>
        <label>3</label>
    </ligand>
</feature>
<feature type="binding site" evidence="4">
    <location>
        <position position="458"/>
    </location>
    <ligand>
        <name>Ca(2+)</name>
        <dbReference type="ChEBI" id="CHEBI:29108"/>
        <label>3</label>
    </ligand>
</feature>
<feature type="binding site" evidence="4">
    <location>
        <position position="482"/>
    </location>
    <ligand>
        <name>Ca(2+)</name>
        <dbReference type="ChEBI" id="CHEBI:29108"/>
        <label>4</label>
    </ligand>
</feature>
<feature type="binding site" evidence="4">
    <location>
        <position position="484"/>
    </location>
    <ligand>
        <name>Ca(2+)</name>
        <dbReference type="ChEBI" id="CHEBI:29108"/>
        <label>4</label>
    </ligand>
</feature>
<feature type="binding site" evidence="4">
    <location>
        <position position="486"/>
    </location>
    <ligand>
        <name>Ca(2+)</name>
        <dbReference type="ChEBI" id="CHEBI:29108"/>
        <label>4</label>
    </ligand>
</feature>
<feature type="binding site" evidence="4">
    <location>
        <position position="488"/>
    </location>
    <ligand>
        <name>Ca(2+)</name>
        <dbReference type="ChEBI" id="CHEBI:29108"/>
        <label>4</label>
    </ligand>
</feature>
<feature type="binding site" evidence="4">
    <location>
        <position position="493"/>
    </location>
    <ligand>
        <name>Ca(2+)</name>
        <dbReference type="ChEBI" id="CHEBI:29108"/>
        <label>4</label>
    </ligand>
</feature>
<feature type="lipid moiety-binding region" description="N-myristoyl glycine" evidence="2">
    <location>
        <position position="2"/>
    </location>
</feature>